<organism>
    <name type="scientific">Streptococcus pneumoniae</name>
    <dbReference type="NCBI Taxonomy" id="1313"/>
    <lineage>
        <taxon>Bacteria</taxon>
        <taxon>Bacillati</taxon>
        <taxon>Bacillota</taxon>
        <taxon>Bacilli</taxon>
        <taxon>Lactobacillales</taxon>
        <taxon>Streptococcaceae</taxon>
        <taxon>Streptococcus</taxon>
    </lineage>
</organism>
<name>STKP_STREE</name>
<dbReference type="EC" id="2.7.11.1" evidence="5"/>
<dbReference type="EMBL" id="AF285441">
    <property type="protein sequence ID" value="AAM47530.1"/>
    <property type="molecule type" value="Genomic_DNA"/>
</dbReference>
<dbReference type="SMR" id="Q8KY50"/>
<dbReference type="IntAct" id="Q8KY50">
    <property type="interactions" value="1"/>
</dbReference>
<dbReference type="GO" id="GO:0005886">
    <property type="term" value="C:plasma membrane"/>
    <property type="evidence" value="ECO:0007669"/>
    <property type="project" value="UniProtKB-SubCell"/>
</dbReference>
<dbReference type="GO" id="GO:0005524">
    <property type="term" value="F:ATP binding"/>
    <property type="evidence" value="ECO:0007669"/>
    <property type="project" value="UniProtKB-KW"/>
</dbReference>
<dbReference type="GO" id="GO:0106310">
    <property type="term" value="F:protein serine kinase activity"/>
    <property type="evidence" value="ECO:0007669"/>
    <property type="project" value="RHEA"/>
</dbReference>
<dbReference type="GO" id="GO:0004674">
    <property type="term" value="F:protein serine/threonine kinase activity"/>
    <property type="evidence" value="ECO:0007669"/>
    <property type="project" value="UniProtKB-KW"/>
</dbReference>
<dbReference type="GO" id="GO:0000917">
    <property type="term" value="P:division septum assembly"/>
    <property type="evidence" value="ECO:0007669"/>
    <property type="project" value="UniProtKB-KW"/>
</dbReference>
<dbReference type="GO" id="GO:0030420">
    <property type="term" value="P:establishment of competence for transformation"/>
    <property type="evidence" value="ECO:0007669"/>
    <property type="project" value="UniProtKB-KW"/>
</dbReference>
<dbReference type="GO" id="GO:0051302">
    <property type="term" value="P:regulation of cell division"/>
    <property type="evidence" value="ECO:0000315"/>
    <property type="project" value="CACAO"/>
</dbReference>
<dbReference type="GO" id="GO:0008360">
    <property type="term" value="P:regulation of cell shape"/>
    <property type="evidence" value="ECO:0007669"/>
    <property type="project" value="UniProtKB-KW"/>
</dbReference>
<dbReference type="CDD" id="cd06577">
    <property type="entry name" value="PASTA_pknB"/>
    <property type="match status" value="3"/>
</dbReference>
<dbReference type="CDD" id="cd14014">
    <property type="entry name" value="STKc_PknB_like"/>
    <property type="match status" value="1"/>
</dbReference>
<dbReference type="FunFam" id="1.10.510.10:FF:000021">
    <property type="entry name" value="Serine/threonine protein kinase"/>
    <property type="match status" value="1"/>
</dbReference>
<dbReference type="FunFam" id="3.30.200.20:FF:000035">
    <property type="entry name" value="Serine/threonine protein kinase Stk1"/>
    <property type="match status" value="1"/>
</dbReference>
<dbReference type="Gene3D" id="3.30.10.20">
    <property type="match status" value="4"/>
</dbReference>
<dbReference type="Gene3D" id="3.30.200.20">
    <property type="entry name" value="Phosphorylase Kinase, domain 1"/>
    <property type="match status" value="1"/>
</dbReference>
<dbReference type="Gene3D" id="1.10.510.10">
    <property type="entry name" value="Transferase(Phosphotransferase) domain 1"/>
    <property type="match status" value="1"/>
</dbReference>
<dbReference type="InterPro" id="IPR011009">
    <property type="entry name" value="Kinase-like_dom_sf"/>
</dbReference>
<dbReference type="InterPro" id="IPR005543">
    <property type="entry name" value="PASTA_dom"/>
</dbReference>
<dbReference type="InterPro" id="IPR000719">
    <property type="entry name" value="Prot_kinase_dom"/>
</dbReference>
<dbReference type="InterPro" id="IPR017441">
    <property type="entry name" value="Protein_kinase_ATP_BS"/>
</dbReference>
<dbReference type="InterPro" id="IPR008271">
    <property type="entry name" value="Ser/Thr_kinase_AS"/>
</dbReference>
<dbReference type="NCBIfam" id="NF033483">
    <property type="entry name" value="PknB_PASTA_kin"/>
    <property type="match status" value="1"/>
</dbReference>
<dbReference type="PANTHER" id="PTHR43289">
    <property type="entry name" value="MITOGEN-ACTIVATED PROTEIN KINASE KINASE KINASE 20-RELATED"/>
    <property type="match status" value="1"/>
</dbReference>
<dbReference type="PANTHER" id="PTHR43289:SF34">
    <property type="entry name" value="SERINE_THREONINE-PROTEIN KINASE YBDM-RELATED"/>
    <property type="match status" value="1"/>
</dbReference>
<dbReference type="Pfam" id="PF03793">
    <property type="entry name" value="PASTA"/>
    <property type="match status" value="4"/>
</dbReference>
<dbReference type="Pfam" id="PF00069">
    <property type="entry name" value="Pkinase"/>
    <property type="match status" value="1"/>
</dbReference>
<dbReference type="SMART" id="SM00740">
    <property type="entry name" value="PASTA"/>
    <property type="match status" value="4"/>
</dbReference>
<dbReference type="SMART" id="SM00220">
    <property type="entry name" value="S_TKc"/>
    <property type="match status" value="1"/>
</dbReference>
<dbReference type="SUPFAM" id="SSF56112">
    <property type="entry name" value="Protein kinase-like (PK-like)"/>
    <property type="match status" value="1"/>
</dbReference>
<dbReference type="PROSITE" id="PS51178">
    <property type="entry name" value="PASTA"/>
    <property type="match status" value="4"/>
</dbReference>
<dbReference type="PROSITE" id="PS00107">
    <property type="entry name" value="PROTEIN_KINASE_ATP"/>
    <property type="match status" value="1"/>
</dbReference>
<dbReference type="PROSITE" id="PS50011">
    <property type="entry name" value="PROTEIN_KINASE_DOM"/>
    <property type="match status" value="1"/>
</dbReference>
<dbReference type="PROSITE" id="PS00108">
    <property type="entry name" value="PROTEIN_KINASE_ST"/>
    <property type="match status" value="1"/>
</dbReference>
<feature type="chain" id="PRO_0000418143" description="Serine/threonine-protein kinase StkP">
    <location>
        <begin position="1"/>
        <end position="659"/>
    </location>
</feature>
<feature type="topological domain" description="Cytoplasmic" evidence="15">
    <location>
        <begin position="1"/>
        <end position="342"/>
    </location>
</feature>
<feature type="transmembrane region" description="Helical" evidence="14">
    <location>
        <begin position="343"/>
        <end position="363"/>
    </location>
</feature>
<feature type="topological domain" description="Periplasmic" evidence="15">
    <location>
        <begin position="364"/>
        <end position="659"/>
    </location>
</feature>
<feature type="domain" description="Protein kinase" evidence="1">
    <location>
        <begin position="12"/>
        <end position="273"/>
    </location>
</feature>
<feature type="domain" description="PASTA 1" evidence="2">
    <location>
        <begin position="366"/>
        <end position="433"/>
    </location>
</feature>
<feature type="domain" description="PASTA 2" evidence="2">
    <location>
        <begin position="434"/>
        <end position="505"/>
    </location>
</feature>
<feature type="domain" description="PASTA 3" evidence="2">
    <location>
        <begin position="506"/>
        <end position="577"/>
    </location>
</feature>
<feature type="domain" description="PASTA 4" evidence="2">
    <location>
        <begin position="578"/>
        <end position="651"/>
    </location>
</feature>
<feature type="region of interest" description="Disordered" evidence="4">
    <location>
        <begin position="541"/>
        <end position="561"/>
    </location>
</feature>
<feature type="active site" description="Proton acceptor" evidence="1 3">
    <location>
        <position position="136"/>
    </location>
</feature>
<feature type="binding site" evidence="1">
    <location>
        <begin position="18"/>
        <end position="26"/>
    </location>
    <ligand>
        <name>ATP</name>
        <dbReference type="ChEBI" id="CHEBI:30616"/>
    </ligand>
</feature>
<feature type="binding site" evidence="1">
    <location>
        <position position="42"/>
    </location>
    <ligand>
        <name>ATP</name>
        <dbReference type="ChEBI" id="CHEBI:30616"/>
    </ligand>
</feature>
<feature type="mutagenesis site" description="Dramatic reduction of phosphorylation." evidence="5 9">
    <original>K</original>
    <variation>R</variation>
    <location>
        <position position="42"/>
    </location>
</feature>
<reference key="1">
    <citation type="submission" date="2000-07" db="EMBL/GenBank/DDBJ databases">
        <title>A serine/threonine kinase involved in competence regulation.</title>
        <authorList>
            <person name="Echenique J.R."/>
            <person name="Trombe M.C."/>
        </authorList>
    </citation>
    <scope>NUCLEOTIDE SEQUENCE [GENOMIC DNA]</scope>
    <source>
        <strain>Rx / Cp1015</strain>
    </source>
</reference>
<reference key="2">
    <citation type="journal article" date="2005" name="FEBS J.">
        <title>Characterization of a eukaryotic type serine/threonine protein kinase and protein phosphatase of Streptococcus pneumoniae and identification of kinase substrates.</title>
        <authorList>
            <person name="Novakova L."/>
            <person name="Saskova L."/>
            <person name="Pallova P."/>
            <person name="Janecek J."/>
            <person name="Novotna J."/>
            <person name="Ulrych A."/>
            <person name="Echenique J."/>
            <person name="Trombe M.C."/>
            <person name="Branny P."/>
        </authorList>
    </citation>
    <scope>FUNCTION</scope>
    <scope>CATALYTIC ACTIVITY</scope>
    <scope>IDENTIFICATION OF TARGET SUBSTRATES</scope>
    <scope>ACTIVITY REGULATION</scope>
    <scope>PHOSPHORYLATION</scope>
    <scope>PTM</scope>
    <scope>PH DEPENDENCE</scope>
    <scope>SUBCELLULAR LOCATION</scope>
    <scope>OPERON STRUCTURE</scope>
    <scope>MUTAGENESIS OF LYS-42</scope>
    <source>
        <strain>Rx / Cp1015</strain>
    </source>
</reference>
<reference key="3">
    <citation type="journal article" date="2007" name="Biochem. Biophys. Res. Commun.">
        <title>A eukaryotic-type serine/threonine protein kinase StkP of Streptococcus pneumoniae acts as a dimer in vivo.</title>
        <authorList>
            <person name="Pallova P."/>
            <person name="Hercik K."/>
            <person name="Saskova L."/>
            <person name="Novakova L."/>
            <person name="Branny P."/>
        </authorList>
    </citation>
    <scope>SUBUNIT</scope>
    <scope>SUBCELLULAR LOCATION</scope>
    <scope>AUTOPHOSPHORYLATION ACTIVITY</scope>
    <scope>DOMAIN</scope>
    <source>
        <strain>Rx / Cp1015</strain>
    </source>
</reference>
<reference key="4">
    <citation type="journal article" date="2007" name="J. Bacteriol.">
        <title>Eukaryotic-type serine/threonine protein kinase StkP is a global regulator of gene expression in Streptococcus pneumoniae.</title>
        <authorList>
            <person name="Saskova L."/>
            <person name="Novakova L."/>
            <person name="Basler M."/>
            <person name="Branny P."/>
        </authorList>
    </citation>
    <scope>FUNCTION AS A GLOBAL TRANSCRIPTIONAL REGULATOR</scope>
    <scope>DISRUPTION PHENOTYPE</scope>
    <source>
        <strain>Rx / Cp1015</strain>
    </source>
</reference>
<reference key="5">
    <citation type="journal article" date="2009" name="J. Bacteriol.">
        <title>The StkP/PhpP signaling couple in Streptococcus pneumoniae: cellular organization and physiological characterization.</title>
        <authorList>
            <person name="Osaki M."/>
            <person name="Arcondeguy T."/>
            <person name="Bastide A."/>
            <person name="Touriol C."/>
            <person name="Prats H."/>
            <person name="Trombe M.C."/>
        </authorList>
    </citation>
    <scope>FUNCTION IN COMPETENCE</scope>
    <scope>INTERACTION WITH PHPP</scope>
    <scope>SUBCELLULAR LOCATION</scope>
    <scope>TOPOLOGY</scope>
    <source>
        <strain>Rx / Cp1015</strain>
    </source>
</reference>
<reference key="6">
    <citation type="journal article" date="2010" name="J. Bacteriol.">
        <title>Identification of multiple substrates of the StkP Ser/Thr protein kinase in Streptococcus pneumoniae.</title>
        <authorList>
            <person name="Novakova L."/>
            <person name="Bezouskova S."/>
            <person name="Pompach P."/>
            <person name="Spidlova P."/>
            <person name="Saskova L."/>
            <person name="Weiser J."/>
            <person name="Branny P."/>
        </authorList>
    </citation>
    <scope>FUNCTION</scope>
    <scope>ROLE IN CELL DIVISION</scope>
    <scope>IDENTIFICATION OF TARGET SUBSTRATES</scope>
    <scope>ACTIVITY REGULATION</scope>
    <scope>DISRUPTION PHENOTYPE</scope>
    <scope>DOMAIN</scope>
    <scope>MUTAGENESIS OF LYS-42</scope>
    <source>
        <strain>Rx / Cp1015</strain>
    </source>
</reference>
<reference key="7">
    <citation type="journal article" date="2011" name="FEBS Lett.">
        <title>Recognition of peptidoglycan and beta-lactam antibiotics by the extracellular domain of the Ser/Thr protein kinase StkP from Streptococcus pneumoniae.</title>
        <authorList>
            <person name="Maestro B."/>
            <person name="Novakova L."/>
            <person name="Hesek D."/>
            <person name="Lee M."/>
            <person name="Leyva E."/>
            <person name="Mobashery S."/>
            <person name="Sanz J.M."/>
            <person name="Branny P."/>
        </authorList>
    </citation>
    <scope>PEPTIDOGLYCAN-BINDING</scope>
    <scope>3D-STRUCTURE MODELING OF 363-659</scope>
    <scope>DOMAIN</scope>
    <source>
        <strain>Rx / Cp1015</strain>
    </source>
</reference>
<reference key="8">
    <citation type="journal article" date="2012" name="Proc. Natl. Acad. Sci. U.S.A.">
        <title>Control of cell division in Streptococcus pneumoniae by the conserved Ser/Thr protein kinase StkP.</title>
        <authorList>
            <person name="Beilharz K."/>
            <person name="Novakova L."/>
            <person name="Fadda D."/>
            <person name="Branny P."/>
            <person name="Massidda O."/>
            <person name="Veening J.W."/>
        </authorList>
    </citation>
    <scope>FUNCTION</scope>
    <scope>SUBCELLULAR LOCATION</scope>
    <source>
        <strain>Rx1</strain>
    </source>
</reference>
<reference key="9">
    <citation type="journal article" date="2015" name="MBio">
        <title>LocZ is a new cell division protein involved in proper septum placement in Streptococcus pneumoniae.</title>
        <authorList>
            <person name="Holeckova N."/>
            <person name="Doubravova L."/>
            <person name="Massidda O."/>
            <person name="Molle V."/>
            <person name="Buriankova K."/>
            <person name="Benada O."/>
            <person name="Kofronova O."/>
            <person name="Ulrych A."/>
            <person name="Branny P."/>
        </authorList>
    </citation>
    <scope>FUNCTION</scope>
    <source>
        <strain>D39</strain>
        <strain>R6</strain>
        <strain>Rx1</strain>
    </source>
</reference>
<reference key="10">
    <citation type="journal article" date="2016" name="BMC Microbiol.">
        <title>Characterization of pneumococcal Ser/Thr protein phosphatase phpP mutant and identification of a novel PhpP substrate, putative RNA binding protein Jag.</title>
        <authorList>
            <person name="Ulrych A."/>
            <person name="Holeckova N."/>
            <person name="Goldova J."/>
            <person name="Doubravova L."/>
            <person name="Benada O."/>
            <person name="Kofronova O."/>
            <person name="Halada P."/>
            <person name="Branny P."/>
        </authorList>
    </citation>
    <scope>FUNCTION</scope>
    <scope>SUBSTRATE</scope>
    <scope>DISRUPTION PHENOTYPE</scope>
    <source>
        <strain>Rx1</strain>
    </source>
</reference>
<proteinExistence type="evidence at protein level"/>
<comment type="function">
    <text evidence="5 7 8 9 11 12 13">Protein kinase involved in signal transduction pathways that regulate various cellular processes. Likely senses intracellular peptidoglycan subunits present in the cell division septa of actively growing cells; thus, intracellular unlinked peptidoglycan may serve as the signal molecules that trigger StkP phosphorylation activity on a set of substrates. Plays a crucial role in the regulation of cell shape and cell division of S.pneumoniae through control of at least DivIVA activity. Is involved in competence triggering, via the transduction of signals culminating directly or indirectly in ComD activation. Is important for the resistance of S.pneumoniae to various environmental stress conditions. Appears to be a global regulator that positively controls the transcription of a set of genes encoding functions involved in cell wall metabolism, pyrimidine biosynthesis, DNA repair, iron uptake, and oxidative stress response, and that seems to down-regulate genes employed in competence. Since StkP is unlikely to directly regulate transcription, the input signal must be transmitted through an effector molecule. Identified target substrates that are specifically phosphorylated by StkP in vivo, mainly on threonine residues, are DivIVA, GlmM, PpaC, MapZ, KhpB (also called EloR/Jag) and StkP itself. Autophosphorylated StkP is a substrate for the cotranscribed protein phosphatase PhpP; PhpP and StkP appear to constitute a functional signaling couple in vivo.</text>
</comment>
<comment type="catalytic activity">
    <reaction evidence="5">
        <text>L-seryl-[protein] + ATP = O-phospho-L-seryl-[protein] + ADP + H(+)</text>
        <dbReference type="Rhea" id="RHEA:17989"/>
        <dbReference type="Rhea" id="RHEA-COMP:9863"/>
        <dbReference type="Rhea" id="RHEA-COMP:11604"/>
        <dbReference type="ChEBI" id="CHEBI:15378"/>
        <dbReference type="ChEBI" id="CHEBI:29999"/>
        <dbReference type="ChEBI" id="CHEBI:30616"/>
        <dbReference type="ChEBI" id="CHEBI:83421"/>
        <dbReference type="ChEBI" id="CHEBI:456216"/>
        <dbReference type="EC" id="2.7.11.1"/>
    </reaction>
</comment>
<comment type="catalytic activity">
    <reaction evidence="5">
        <text>L-threonyl-[protein] + ATP = O-phospho-L-threonyl-[protein] + ADP + H(+)</text>
        <dbReference type="Rhea" id="RHEA:46608"/>
        <dbReference type="Rhea" id="RHEA-COMP:11060"/>
        <dbReference type="Rhea" id="RHEA-COMP:11605"/>
        <dbReference type="ChEBI" id="CHEBI:15378"/>
        <dbReference type="ChEBI" id="CHEBI:30013"/>
        <dbReference type="ChEBI" id="CHEBI:30616"/>
        <dbReference type="ChEBI" id="CHEBI:61977"/>
        <dbReference type="ChEBI" id="CHEBI:456216"/>
        <dbReference type="EC" id="2.7.11.1"/>
    </reaction>
</comment>
<comment type="activity regulation">
    <text evidence="5 9">StkP is activated continuously during growth and its activity is inhibited upon growth arrest. Inhibited by staurosporine, a known protein kinase inhibitor.</text>
</comment>
<comment type="biophysicochemical properties">
    <phDependence>
        <text evidence="5">Active over the wide range of pH from 3 to 9.</text>
    </phDependence>
</comment>
<comment type="subunit">
    <text evidence="6 8">Homodimer. StkP forms dimers through its transmembrane and extracellular domains. Dimer formation likely promotes autophosphorylation activity and might be necessary for targeting StkP substrate. Interacts with PhpP via its kinase domain.</text>
</comment>
<comment type="interaction">
    <interactant intactId="EBI-6405629">
        <id>Q8KY50</id>
    </interactant>
    <interactant intactId="EBI-6405646">
        <id>Q8KY51</id>
        <label>phpP</label>
    </interactant>
    <organismsDiffer>false</organismsDiffer>
    <experiments>2</experiments>
</comment>
<comment type="subcellular location">
    <subcellularLocation>
        <location evidence="5 6 8 11">Cell membrane</location>
        <topology evidence="5 6 8 11">Single-pass membrane protein</topology>
    </subcellularLocation>
    <text>The C-terminal PASTA domain is located in the periplasmic space, beneath the peptidoglycan cell wall, and the kinase domain is located in the cytoplasm. However, another study in the virulent strain TIGR4 (PubMed:20223804) showed that the C-terminal PASTA domain is exposed extracellularly. Localizes to the midcell division sites.</text>
</comment>
<comment type="induction">
    <text evidence="5">The phpP and stkP genes form an operon.</text>
</comment>
<comment type="domain">
    <text evidence="6 9 10">Consists of an N-terminal kinase domain, a transmembrane domain, and a C-terminal domain containing four repeats of the PASTA signature sequence (Penicillin-binding protein and Ser/Thr protein kinase associated domain). The C-terminal domain binds to synthetic and native peptidoglycan (PGN) subunits and to beta-lactam antibiotics, which mimic the terminal portions of the PGN stem peptide. Deletion of both the transmembrane domain and the PASTA domain negatively affects the stability of the core kinase domain. In contrast, the membrane anchored kinase domain and the full-length form of StkP are stable and capable of autophosphorylation. However, the membrane anchored kinase domain (i.e. StkP lacking the C-terminal PASTA domain) is unable to phosphorylate its substrates, which means that the PASTA domain is essential for StkP activation and substrate phosphorylation. The PASTA domain is also responsible for cellular targeting to midcell (shown in the virulent strain D39). Both the transmembrane and extracellular domains promote dimerization of StkP.</text>
</comment>
<comment type="PTM">
    <text evidence="5 16">Autophosphorylation occurs predominantly on threonine residue(s) and weakly on serine residue(s). Dephosphorylated by PhpP.</text>
</comment>
<comment type="disruption phenotype">
    <text evidence="7 9 13">Cells lacking this gene have a significantly reduced growth rate in the early exponential phase, exhibit an increased rate of autolysis at the stationary phase of growth and do not achieve the same final optical density as the wild-type strain. Their growth is almost completely impaired at 40 degrees Celsius, in contrast to that of the wild-type strain which is unaffected at this temperature. The mutant strain is also more susceptible to oxidative stress, to osmotic stress, and is less tolerant to acidic pH. Moreover, inactivation of stkP leads to morphological changes: a significant number of cells do not have the typical ovoid shape but appear to be longer with rather oval poles, and they exhibit an apparent cell division defect. Complete loss of Thr-phosphorylation, competence is decreased (PubMed:27776484).</text>
</comment>
<comment type="miscellaneous">
    <text evidence="15 16">Strain Rx1 is unencapsulated.</text>
</comment>
<comment type="similarity">
    <text evidence="1">Belongs to the protein kinase superfamily. Ser/Thr protein kinase family.</text>
</comment>
<keyword id="KW-0067">ATP-binding</keyword>
<keyword id="KW-0131">Cell cycle</keyword>
<keyword id="KW-0132">Cell division</keyword>
<keyword id="KW-1003">Cell membrane</keyword>
<keyword id="KW-0133">Cell shape</keyword>
<keyword id="KW-0178">Competence</keyword>
<keyword id="KW-0418">Kinase</keyword>
<keyword id="KW-0472">Membrane</keyword>
<keyword id="KW-0547">Nucleotide-binding</keyword>
<keyword id="KW-0597">Phosphoprotein</keyword>
<keyword id="KW-0677">Repeat</keyword>
<keyword id="KW-0717">Septation</keyword>
<keyword id="KW-0723">Serine/threonine-protein kinase</keyword>
<keyword id="KW-0804">Transcription</keyword>
<keyword id="KW-0805">Transcription regulation</keyword>
<keyword id="KW-0808">Transferase</keyword>
<keyword id="KW-0812">Transmembrane</keyword>
<keyword id="KW-1133">Transmembrane helix</keyword>
<sequence>MIQIGKIFAGRYRIVKQIGRGGMADVYLAKDLILDGEEVAVKVLRTNYQTDPIAVARFQREARAMADLDHPHIVRITDIGEEDGQQYLAMEYVAGLDLKRYIKEHYPLSNEEAVRIMRQILLAMRLAHTRGIVHRDLKPQNILLTPDGTAKVTDFGIAVAFAETSLTQTNSMLGSVHYLSPEQARGSKATVQSDIYAMGIIFYEMLTGHIPYDGDSAVTIALQHFQNPLPSVIAENSSVPQALENVIIKATAKKLTNRYRSVSEMYVDLSSSLSYNRRNESKLIFDETSKADTKTLPKVSQSTLTSIPKVQAQTEHKSIKNPSQAVTEETYQPQAPKKHRFKMRYLILLASLVLVAASLIWILSRSPATIAIPDVAGQTVAEAKATLKKANFEIGEEKTEASEKVEEGRIIRTDPGAGTGRKEGTKINLVVSSGKQSFQISNYVGRKSSDVIAELKEKKVPDNLIKIEEEESNESEAGTVLKQSLPEGTTYDLSKATQIVLTVAKKATTIQLGNYIGRNSTEVISELKQKKVPENLIKIEEEESSESEPGTIMKQSPGAGTTYDVSKPTQIVLTVAKKVTSVAMPSYIGSSLEFTKNNLIQIVGIKEANIEVVEVTTAPAGSVEGMVVEQSPRAGEKVDLNKTRVKISIYKPKTTSATP</sequence>
<accession>Q8KY50</accession>
<gene>
    <name type="primary">stkP</name>
</gene>
<protein>
    <recommendedName>
        <fullName>Serine/threonine-protein kinase StkP</fullName>
        <shortName>Ser/Thr-protein kinase StkP</shortName>
        <ecNumber evidence="5">2.7.11.1</ecNumber>
    </recommendedName>
    <alternativeName>
        <fullName>Eukaryotic-type Ser/Thr protein kinase</fullName>
        <shortName>ESTPK</shortName>
    </alternativeName>
</protein>
<evidence type="ECO:0000255" key="1">
    <source>
        <dbReference type="PROSITE-ProRule" id="PRU00159"/>
    </source>
</evidence>
<evidence type="ECO:0000255" key="2">
    <source>
        <dbReference type="PROSITE-ProRule" id="PRU00528"/>
    </source>
</evidence>
<evidence type="ECO:0000255" key="3">
    <source>
        <dbReference type="PROSITE-ProRule" id="PRU10027"/>
    </source>
</evidence>
<evidence type="ECO:0000256" key="4">
    <source>
        <dbReference type="SAM" id="MobiDB-lite"/>
    </source>
</evidence>
<evidence type="ECO:0000269" key="5">
    <source>
    </source>
</evidence>
<evidence type="ECO:0000269" key="6">
    <source>
    </source>
</evidence>
<evidence type="ECO:0000269" key="7">
    <source>
    </source>
</evidence>
<evidence type="ECO:0000269" key="8">
    <source>
    </source>
</evidence>
<evidence type="ECO:0000269" key="9">
    <source>
    </source>
</evidence>
<evidence type="ECO:0000269" key="10">
    <source>
    </source>
</evidence>
<evidence type="ECO:0000269" key="11">
    <source>
    </source>
</evidence>
<evidence type="ECO:0000269" key="12">
    <source>
    </source>
</evidence>
<evidence type="ECO:0000269" key="13">
    <source>
    </source>
</evidence>
<evidence type="ECO:0000305" key="14"/>
<evidence type="ECO:0000305" key="15">
    <source>
    </source>
</evidence>
<evidence type="ECO:0000305" key="16">
    <source>
    </source>
</evidence>